<sequence length="320" mass="34671">MKILVTGGAGFIGSHFVTSLISGDIATPQPVTQVTVVDKLGYGGNLRNLAEASADPRFSFVRGDICDEGLIEGLMARHDTVAHFAAETHVDRSVVASGPFVASNLVGTQVLLDAALRHHIGRFLHVSTDEVYGSIDTGSWAEGHPLAPNSPYAASKAGSDLLALAYHQTHGMDVVVTRCSNNYGPRQFPEKMIPLFVTRLLDGLDVPVYGDGRNIRDWLHVSDHCRGLALALGAGRAGEVYHIGGGWEATNLELTEILLEACGAPASRISFVTDRKGHDRRYSLDYSKIAGELGYRPRVDFTDGIAETVAWYRANRSWWT</sequence>
<dbReference type="EC" id="4.2.1.46" evidence="2"/>
<dbReference type="EMBL" id="Y18523">
    <property type="protein sequence ID" value="CAA77209.2"/>
    <property type="molecule type" value="Genomic_DNA"/>
</dbReference>
<dbReference type="EMBL" id="CP003170">
    <property type="protein sequence ID" value="AEV84576.1"/>
    <property type="molecule type" value="Genomic_DNA"/>
</dbReference>
<dbReference type="RefSeq" id="WP_014690648.1">
    <property type="nucleotide sequence ID" value="NC_017803.1"/>
</dbReference>
<dbReference type="SMR" id="Q9ZAE8"/>
<dbReference type="STRING" id="134676.ACPL_3681"/>
<dbReference type="KEGG" id="ase:ACPL_3681"/>
<dbReference type="PATRIC" id="fig|134676.3.peg.3597"/>
<dbReference type="eggNOG" id="COG1088">
    <property type="taxonomic scope" value="Bacteria"/>
</dbReference>
<dbReference type="HOGENOM" id="CLU_007383_1_14_11"/>
<dbReference type="OrthoDB" id="9801785at2"/>
<dbReference type="Proteomes" id="UP000005440">
    <property type="component" value="Chromosome"/>
</dbReference>
<dbReference type="GO" id="GO:0008460">
    <property type="term" value="F:dTDP-glucose 4,6-dehydratase activity"/>
    <property type="evidence" value="ECO:0000250"/>
    <property type="project" value="UniProtKB"/>
</dbReference>
<dbReference type="GO" id="GO:0009225">
    <property type="term" value="P:nucleotide-sugar metabolic process"/>
    <property type="evidence" value="ECO:0007669"/>
    <property type="project" value="InterPro"/>
</dbReference>
<dbReference type="GO" id="GO:0000271">
    <property type="term" value="P:polysaccharide biosynthetic process"/>
    <property type="evidence" value="ECO:0000250"/>
    <property type="project" value="UniProtKB"/>
</dbReference>
<dbReference type="CDD" id="cd05246">
    <property type="entry name" value="dTDP_GD_SDR_e"/>
    <property type="match status" value="1"/>
</dbReference>
<dbReference type="Gene3D" id="3.40.50.720">
    <property type="entry name" value="NAD(P)-binding Rossmann-like Domain"/>
    <property type="match status" value="1"/>
</dbReference>
<dbReference type="Gene3D" id="3.90.25.10">
    <property type="entry name" value="UDP-galactose 4-epimerase, domain 1"/>
    <property type="match status" value="1"/>
</dbReference>
<dbReference type="InterPro" id="IPR005888">
    <property type="entry name" value="dTDP_Gluc_deHydtase"/>
</dbReference>
<dbReference type="InterPro" id="IPR016040">
    <property type="entry name" value="NAD(P)-bd_dom"/>
</dbReference>
<dbReference type="InterPro" id="IPR036291">
    <property type="entry name" value="NAD(P)-bd_dom_sf"/>
</dbReference>
<dbReference type="NCBIfam" id="TIGR01181">
    <property type="entry name" value="dTDP_gluc_dehyt"/>
    <property type="match status" value="1"/>
</dbReference>
<dbReference type="PANTHER" id="PTHR43000">
    <property type="entry name" value="DTDP-D-GLUCOSE 4,6-DEHYDRATASE-RELATED"/>
    <property type="match status" value="1"/>
</dbReference>
<dbReference type="Pfam" id="PF16363">
    <property type="entry name" value="GDP_Man_Dehyd"/>
    <property type="match status" value="1"/>
</dbReference>
<dbReference type="SUPFAM" id="SSF51735">
    <property type="entry name" value="NAD(P)-binding Rossmann-fold domains"/>
    <property type="match status" value="1"/>
</dbReference>
<keyword id="KW-0456">Lyase</keyword>
<keyword id="KW-0520">NAD</keyword>
<keyword id="KW-1185">Reference proteome</keyword>
<accession>Q9ZAE8</accession>
<accession>G8SLW2</accession>
<reference key="1">
    <citation type="journal article" date="1999" name="J. Biol. Chem.">
        <title>The AcbC protein from Actinoplanes species is a C7-cyclitol synthase related to 3-dehydroquinate synthases and is involved in the biosynthesis of the alpha-glucosidase inhibitor acarbose.</title>
        <authorList>
            <person name="Stratmann A."/>
            <person name="Mahmud T."/>
            <person name="Lee S."/>
            <person name="Distler J."/>
            <person name="Floss H.G."/>
            <person name="Piepersberg W."/>
        </authorList>
    </citation>
    <scope>NUCLEOTIDE SEQUENCE [GENOMIC DNA]</scope>
    <scope>FUNCTION</scope>
    <source>
        <strain>ATCC 31044 / CBS 674.73 / SE50/110</strain>
    </source>
</reference>
<reference key="2">
    <citation type="submission" date="2006-01" db="EMBL/GenBank/DDBJ databases">
        <authorList>
            <person name="Wehmeier U.F."/>
        </authorList>
    </citation>
    <scope>SEQUENCE REVISION</scope>
</reference>
<reference key="3">
    <citation type="submission" date="2011-12" db="EMBL/GenBank/DDBJ databases">
        <title>The complete genome sequence of the acarbose producer Actinoplanes sp. SE50/110.</title>
        <authorList>
            <person name="Schwientek P."/>
            <person name="Szczepanowski R."/>
            <person name="Kalinowski J."/>
            <person name="Klein A."/>
            <person name="Selber K."/>
            <person name="Wehmeier U.F."/>
            <person name="Stoye J."/>
            <person name="Puehler A."/>
        </authorList>
    </citation>
    <scope>NUCLEOTIDE SEQUENCE [LARGE SCALE GENOMIC DNA]</scope>
    <source>
        <strain>ATCC 31044 / CBS 674.73 / SE50/110</strain>
    </source>
</reference>
<name>RMLB_ACTS5</name>
<gene>
    <name evidence="4" type="primary">acbB</name>
    <name type="ordered locus">ACPL_3681</name>
</gene>
<proteinExistence type="inferred from homology"/>
<protein>
    <recommendedName>
        <fullName evidence="4">dTDP-glucose 4,6-dehydratase</fullName>
        <ecNumber evidence="2">4.2.1.46</ecNumber>
    </recommendedName>
</protein>
<comment type="function">
    <text evidence="2 3">Probably involved in the biosynthesis of the acarviose moiety of the alpha-glucosidase inhibitor acarbose (PubMed:10196166). Catalyzes the dehydration of dTDP-D-glucose to form dTDP-6-deoxy-D-xylo-4-hexulose via a three-step process involving oxidation, dehydration and reduction (By similarity).</text>
</comment>
<comment type="catalytic activity">
    <reaction evidence="2">
        <text>dTDP-alpha-D-glucose = dTDP-4-dehydro-6-deoxy-alpha-D-glucose + H2O</text>
        <dbReference type="Rhea" id="RHEA:17221"/>
        <dbReference type="ChEBI" id="CHEBI:15377"/>
        <dbReference type="ChEBI" id="CHEBI:57477"/>
        <dbReference type="ChEBI" id="CHEBI:57649"/>
        <dbReference type="EC" id="4.2.1.46"/>
    </reaction>
</comment>
<comment type="cofactor">
    <cofactor evidence="2">
        <name>NAD(+)</name>
        <dbReference type="ChEBI" id="CHEBI:57540"/>
    </cofactor>
    <text evidence="2">Binds 1 NAD(+) per subunit.</text>
</comment>
<comment type="subunit">
    <text evidence="2">Homodimer.</text>
</comment>
<comment type="similarity">
    <text evidence="5">Belongs to the NAD(P)-dependent epimerase/dehydratase family. dTDP-glucose dehydratase subfamily.</text>
</comment>
<organism>
    <name type="scientific">Actinoplanes sp. (strain ATCC 31044 / CBS 674.73 / SE50/110)</name>
    <dbReference type="NCBI Taxonomy" id="134676"/>
    <lineage>
        <taxon>Bacteria</taxon>
        <taxon>Bacillati</taxon>
        <taxon>Actinomycetota</taxon>
        <taxon>Actinomycetes</taxon>
        <taxon>Micromonosporales</taxon>
        <taxon>Micromonosporaceae</taxon>
        <taxon>Actinoplanes</taxon>
    </lineage>
</organism>
<feature type="chain" id="PRO_0000183249" description="dTDP-glucose 4,6-dehydratase">
    <location>
        <begin position="1"/>
        <end position="320"/>
    </location>
</feature>
<feature type="active site" description="Proton donor" evidence="2">
    <location>
        <position position="129"/>
    </location>
</feature>
<feature type="active site" description="Proton acceptor" evidence="2">
    <location>
        <position position="130"/>
    </location>
</feature>
<feature type="active site" description="Proton acceptor" evidence="2">
    <location>
        <position position="152"/>
    </location>
</feature>
<feature type="binding site" evidence="2">
    <location>
        <begin position="11"/>
        <end position="12"/>
    </location>
    <ligand>
        <name>NAD(+)</name>
        <dbReference type="ChEBI" id="CHEBI:57540"/>
    </ligand>
</feature>
<feature type="binding site" evidence="2">
    <location>
        <begin position="38"/>
        <end position="41"/>
    </location>
    <ligand>
        <name>NAD(+)</name>
        <dbReference type="ChEBI" id="CHEBI:57540"/>
    </ligand>
</feature>
<feature type="binding site" evidence="2">
    <location>
        <begin position="64"/>
        <end position="65"/>
    </location>
    <ligand>
        <name>NAD(+)</name>
        <dbReference type="ChEBI" id="CHEBI:57540"/>
    </ligand>
</feature>
<feature type="binding site" evidence="2">
    <location>
        <begin position="84"/>
        <end position="88"/>
    </location>
    <ligand>
        <name>NAD(+)</name>
        <dbReference type="ChEBI" id="CHEBI:57540"/>
    </ligand>
</feature>
<feature type="binding site" evidence="1">
    <location>
        <position position="88"/>
    </location>
    <ligand>
        <name>substrate</name>
    </ligand>
</feature>
<feature type="binding site" evidence="2">
    <location>
        <position position="103"/>
    </location>
    <ligand>
        <name>NAD(+)</name>
        <dbReference type="ChEBI" id="CHEBI:57540"/>
    </ligand>
</feature>
<feature type="binding site" evidence="1">
    <location>
        <position position="128"/>
    </location>
    <ligand>
        <name>substrate</name>
    </ligand>
</feature>
<feature type="binding site" evidence="2">
    <location>
        <begin position="152"/>
        <end position="156"/>
    </location>
    <ligand>
        <name>NAD(+)</name>
        <dbReference type="ChEBI" id="CHEBI:57540"/>
    </ligand>
</feature>
<feature type="binding site" evidence="1">
    <location>
        <position position="181"/>
    </location>
    <ligand>
        <name>substrate</name>
    </ligand>
</feature>
<feature type="binding site" evidence="2">
    <location>
        <position position="182"/>
    </location>
    <ligand>
        <name>NAD(+)</name>
        <dbReference type="ChEBI" id="CHEBI:57540"/>
    </ligand>
</feature>
<feature type="binding site" evidence="1">
    <location>
        <begin position="191"/>
        <end position="192"/>
    </location>
    <ligand>
        <name>substrate</name>
    </ligand>
</feature>
<feature type="binding site" evidence="1">
    <location>
        <begin position="207"/>
        <end position="209"/>
    </location>
    <ligand>
        <name>substrate</name>
    </ligand>
</feature>
<feature type="binding site" evidence="1">
    <location>
        <position position="216"/>
    </location>
    <ligand>
        <name>substrate</name>
    </ligand>
</feature>
<feature type="binding site" evidence="1">
    <location>
        <position position="251"/>
    </location>
    <ligand>
        <name>substrate</name>
    </ligand>
</feature>
<feature type="binding site" evidence="1">
    <location>
        <begin position="274"/>
        <end position="278"/>
    </location>
    <ligand>
        <name>substrate</name>
    </ligand>
</feature>
<evidence type="ECO:0000250" key="1">
    <source>
        <dbReference type="UniProtKB" id="P26391"/>
    </source>
</evidence>
<evidence type="ECO:0000250" key="2">
    <source>
        <dbReference type="UniProtKB" id="P27830"/>
    </source>
</evidence>
<evidence type="ECO:0000269" key="3">
    <source>
    </source>
</evidence>
<evidence type="ECO:0000303" key="4">
    <source>
    </source>
</evidence>
<evidence type="ECO:0000305" key="5"/>